<gene>
    <name type="primary">ABCF3</name>
    <name type="synonym">GCN3</name>
    <name type="ordered locus">At1g64550</name>
    <name type="ORF">F1N19.11</name>
</gene>
<feature type="initiator methionine" description="Removed" evidence="4">
    <location>
        <position position="1"/>
    </location>
</feature>
<feature type="chain" id="PRO_0000274941" description="ABC transporter F family member 3">
    <location>
        <begin position="2"/>
        <end position="715"/>
    </location>
</feature>
<feature type="domain" description="ABC transporter 1" evidence="1">
    <location>
        <begin position="175"/>
        <end position="436"/>
    </location>
</feature>
<feature type="domain" description="ABC transporter 2" evidence="1">
    <location>
        <begin position="504"/>
        <end position="713"/>
    </location>
</feature>
<feature type="region of interest" description="Disordered" evidence="2">
    <location>
        <begin position="96"/>
        <end position="118"/>
    </location>
</feature>
<feature type="binding site" evidence="1">
    <location>
        <begin position="207"/>
        <end position="214"/>
    </location>
    <ligand>
        <name>ATP</name>
        <dbReference type="ChEBI" id="CHEBI:30616"/>
        <label>1</label>
    </ligand>
</feature>
<feature type="binding site" evidence="1">
    <location>
        <begin position="537"/>
        <end position="544"/>
    </location>
    <ligand>
        <name>ATP</name>
        <dbReference type="ChEBI" id="CHEBI:30616"/>
        <label>2</label>
    </ligand>
</feature>
<feature type="modified residue" description="N-acetylthreonine" evidence="4">
    <location>
        <position position="2"/>
    </location>
</feature>
<keyword id="KW-0007">Acetylation</keyword>
<keyword id="KW-0067">ATP-binding</keyword>
<keyword id="KW-0547">Nucleotide-binding</keyword>
<keyword id="KW-1185">Reference proteome</keyword>
<keyword id="KW-0677">Repeat</keyword>
<keyword id="KW-0813">Transport</keyword>
<proteinExistence type="evidence at protein level"/>
<comment type="similarity">
    <text evidence="3">Belongs to the ABC transporter superfamily. ABCF family. EF3 (TC 3.A.1.121) subfamily.</text>
</comment>
<comment type="sequence caution" evidence="3">
    <conflict type="erroneous gene model prediction">
        <sequence resource="EMBL-CDS" id="AAF19673"/>
    </conflict>
    <text>The predicted gene At1g64540 has been split into 2 genes: At1g64540 and At1g64550.</text>
</comment>
<evidence type="ECO:0000255" key="1">
    <source>
        <dbReference type="PROSITE-ProRule" id="PRU00434"/>
    </source>
</evidence>
<evidence type="ECO:0000256" key="2">
    <source>
        <dbReference type="SAM" id="MobiDB-lite"/>
    </source>
</evidence>
<evidence type="ECO:0000305" key="3"/>
<evidence type="ECO:0007744" key="4">
    <source>
    </source>
</evidence>
<dbReference type="EMBL" id="AC009519">
    <property type="protein sequence ID" value="AAF19673.1"/>
    <property type="status" value="ALT_SEQ"/>
    <property type="molecule type" value="Genomic_DNA"/>
</dbReference>
<dbReference type="EMBL" id="CP002684">
    <property type="protein sequence ID" value="AEE34252.1"/>
    <property type="molecule type" value="Genomic_DNA"/>
</dbReference>
<dbReference type="EMBL" id="BT002015">
    <property type="protein sequence ID" value="AAN72026.1"/>
    <property type="molecule type" value="mRNA"/>
</dbReference>
<dbReference type="EMBL" id="BT010544">
    <property type="protein sequence ID" value="AAQ65167.1"/>
    <property type="molecule type" value="mRNA"/>
</dbReference>
<dbReference type="PIR" id="A96669">
    <property type="entry name" value="A96669"/>
</dbReference>
<dbReference type="RefSeq" id="NP_176636.1">
    <property type="nucleotide sequence ID" value="NM_105130.4"/>
</dbReference>
<dbReference type="SMR" id="Q8H0V6"/>
<dbReference type="BioGRID" id="27984">
    <property type="interactions" value="1"/>
</dbReference>
<dbReference type="FunCoup" id="Q8H0V6">
    <property type="interactions" value="4862"/>
</dbReference>
<dbReference type="STRING" id="3702.Q8H0V6"/>
<dbReference type="GlyGen" id="Q8H0V6">
    <property type="glycosylation" value="1 site"/>
</dbReference>
<dbReference type="iPTMnet" id="Q8H0V6"/>
<dbReference type="PaxDb" id="3702-AT1G64550.1"/>
<dbReference type="ProteomicsDB" id="244398"/>
<dbReference type="EnsemblPlants" id="AT1G64550.1">
    <property type="protein sequence ID" value="AT1G64550.1"/>
    <property type="gene ID" value="AT1G64550"/>
</dbReference>
<dbReference type="GeneID" id="842763"/>
<dbReference type="Gramene" id="AT1G64550.1">
    <property type="protein sequence ID" value="AT1G64550.1"/>
    <property type="gene ID" value="AT1G64550"/>
</dbReference>
<dbReference type="KEGG" id="ath:AT1G64550"/>
<dbReference type="Araport" id="AT1G64550"/>
<dbReference type="TAIR" id="AT1G64550">
    <property type="gene designation" value="ABCF3"/>
</dbReference>
<dbReference type="eggNOG" id="KOG0062">
    <property type="taxonomic scope" value="Eukaryota"/>
</dbReference>
<dbReference type="HOGENOM" id="CLU_000604_36_6_1"/>
<dbReference type="InParanoid" id="Q8H0V6"/>
<dbReference type="OMA" id="CTHIADI"/>
<dbReference type="OrthoDB" id="2110130at2759"/>
<dbReference type="PhylomeDB" id="Q8H0V6"/>
<dbReference type="PRO" id="PR:Q8H0V6"/>
<dbReference type="Proteomes" id="UP000006548">
    <property type="component" value="Chromosome 1"/>
</dbReference>
<dbReference type="ExpressionAtlas" id="Q8H0V6">
    <property type="expression patterns" value="baseline and differential"/>
</dbReference>
<dbReference type="GO" id="GO:0005634">
    <property type="term" value="C:nucleus"/>
    <property type="evidence" value="ECO:0007005"/>
    <property type="project" value="TAIR"/>
</dbReference>
<dbReference type="GO" id="GO:0005524">
    <property type="term" value="F:ATP binding"/>
    <property type="evidence" value="ECO:0007669"/>
    <property type="project" value="UniProtKB-KW"/>
</dbReference>
<dbReference type="GO" id="GO:0016887">
    <property type="term" value="F:ATP hydrolysis activity"/>
    <property type="evidence" value="ECO:0007669"/>
    <property type="project" value="InterPro"/>
</dbReference>
<dbReference type="GO" id="GO:0042742">
    <property type="term" value="P:defense response to bacterium"/>
    <property type="evidence" value="ECO:0000315"/>
    <property type="project" value="TAIR"/>
</dbReference>
<dbReference type="CDD" id="cd03221">
    <property type="entry name" value="ABCF_EF-3"/>
    <property type="match status" value="2"/>
</dbReference>
<dbReference type="FunFam" id="3.40.50.300:FF:001135">
    <property type="entry name" value="ABC transporter F family member 3"/>
    <property type="match status" value="1"/>
</dbReference>
<dbReference type="FunFam" id="3.40.50.300:FF:000104">
    <property type="entry name" value="ATP-binding cassette sub-family F member 3"/>
    <property type="match status" value="1"/>
</dbReference>
<dbReference type="Gene3D" id="3.40.50.300">
    <property type="entry name" value="P-loop containing nucleotide triphosphate hydrolases"/>
    <property type="match status" value="2"/>
</dbReference>
<dbReference type="InterPro" id="IPR003593">
    <property type="entry name" value="AAA+_ATPase"/>
</dbReference>
<dbReference type="InterPro" id="IPR032781">
    <property type="entry name" value="ABC_tran_Xtn"/>
</dbReference>
<dbReference type="InterPro" id="IPR003439">
    <property type="entry name" value="ABC_transporter-like_ATP-bd"/>
</dbReference>
<dbReference type="InterPro" id="IPR017871">
    <property type="entry name" value="ABC_transporter-like_CS"/>
</dbReference>
<dbReference type="InterPro" id="IPR050611">
    <property type="entry name" value="ABCF_EF3_subfamily"/>
</dbReference>
<dbReference type="InterPro" id="IPR027417">
    <property type="entry name" value="P-loop_NTPase"/>
</dbReference>
<dbReference type="PANTHER" id="PTHR19211:SF117">
    <property type="entry name" value="ATP-BINDING CASSETTE SUB-FAMILY F MEMBER 3"/>
    <property type="match status" value="1"/>
</dbReference>
<dbReference type="PANTHER" id="PTHR19211">
    <property type="entry name" value="ATP-BINDING TRANSPORT PROTEIN-RELATED"/>
    <property type="match status" value="1"/>
</dbReference>
<dbReference type="Pfam" id="PF00005">
    <property type="entry name" value="ABC_tran"/>
    <property type="match status" value="2"/>
</dbReference>
<dbReference type="Pfam" id="PF12848">
    <property type="entry name" value="ABC_tran_Xtn"/>
    <property type="match status" value="1"/>
</dbReference>
<dbReference type="SMART" id="SM00382">
    <property type="entry name" value="AAA"/>
    <property type="match status" value="2"/>
</dbReference>
<dbReference type="SUPFAM" id="SSF52540">
    <property type="entry name" value="P-loop containing nucleoside triphosphate hydrolases"/>
    <property type="match status" value="2"/>
</dbReference>
<dbReference type="PROSITE" id="PS00211">
    <property type="entry name" value="ABC_TRANSPORTER_1"/>
    <property type="match status" value="2"/>
</dbReference>
<dbReference type="PROSITE" id="PS50893">
    <property type="entry name" value="ABC_TRANSPORTER_2"/>
    <property type="match status" value="2"/>
</dbReference>
<name>AB3F_ARATH</name>
<organism>
    <name type="scientific">Arabidopsis thaliana</name>
    <name type="common">Mouse-ear cress</name>
    <dbReference type="NCBI Taxonomy" id="3702"/>
    <lineage>
        <taxon>Eukaryota</taxon>
        <taxon>Viridiplantae</taxon>
        <taxon>Streptophyta</taxon>
        <taxon>Embryophyta</taxon>
        <taxon>Tracheophyta</taxon>
        <taxon>Spermatophyta</taxon>
        <taxon>Magnoliopsida</taxon>
        <taxon>eudicotyledons</taxon>
        <taxon>Gunneridae</taxon>
        <taxon>Pentapetalae</taxon>
        <taxon>rosids</taxon>
        <taxon>malvids</taxon>
        <taxon>Brassicales</taxon>
        <taxon>Brassicaceae</taxon>
        <taxon>Camelineae</taxon>
        <taxon>Arabidopsis</taxon>
    </lineage>
</organism>
<reference key="1">
    <citation type="journal article" date="2000" name="Nature">
        <title>Sequence and analysis of chromosome 1 of the plant Arabidopsis thaliana.</title>
        <authorList>
            <person name="Theologis A."/>
            <person name="Ecker J.R."/>
            <person name="Palm C.J."/>
            <person name="Federspiel N.A."/>
            <person name="Kaul S."/>
            <person name="White O."/>
            <person name="Alonso J."/>
            <person name="Altafi H."/>
            <person name="Araujo R."/>
            <person name="Bowman C.L."/>
            <person name="Brooks S.Y."/>
            <person name="Buehler E."/>
            <person name="Chan A."/>
            <person name="Chao Q."/>
            <person name="Chen H."/>
            <person name="Cheuk R.F."/>
            <person name="Chin C.W."/>
            <person name="Chung M.K."/>
            <person name="Conn L."/>
            <person name="Conway A.B."/>
            <person name="Conway A.R."/>
            <person name="Creasy T.H."/>
            <person name="Dewar K."/>
            <person name="Dunn P."/>
            <person name="Etgu P."/>
            <person name="Feldblyum T.V."/>
            <person name="Feng J.-D."/>
            <person name="Fong B."/>
            <person name="Fujii C.Y."/>
            <person name="Gill J.E."/>
            <person name="Goldsmith A.D."/>
            <person name="Haas B."/>
            <person name="Hansen N.F."/>
            <person name="Hughes B."/>
            <person name="Huizar L."/>
            <person name="Hunter J.L."/>
            <person name="Jenkins J."/>
            <person name="Johnson-Hopson C."/>
            <person name="Khan S."/>
            <person name="Khaykin E."/>
            <person name="Kim C.J."/>
            <person name="Koo H.L."/>
            <person name="Kremenetskaia I."/>
            <person name="Kurtz D.B."/>
            <person name="Kwan A."/>
            <person name="Lam B."/>
            <person name="Langin-Hooper S."/>
            <person name="Lee A."/>
            <person name="Lee J.M."/>
            <person name="Lenz C.A."/>
            <person name="Li J.H."/>
            <person name="Li Y.-P."/>
            <person name="Lin X."/>
            <person name="Liu S.X."/>
            <person name="Liu Z.A."/>
            <person name="Luros J.S."/>
            <person name="Maiti R."/>
            <person name="Marziali A."/>
            <person name="Militscher J."/>
            <person name="Miranda M."/>
            <person name="Nguyen M."/>
            <person name="Nierman W.C."/>
            <person name="Osborne B.I."/>
            <person name="Pai G."/>
            <person name="Peterson J."/>
            <person name="Pham P.K."/>
            <person name="Rizzo M."/>
            <person name="Rooney T."/>
            <person name="Rowley D."/>
            <person name="Sakano H."/>
            <person name="Salzberg S.L."/>
            <person name="Schwartz J.R."/>
            <person name="Shinn P."/>
            <person name="Southwick A.M."/>
            <person name="Sun H."/>
            <person name="Tallon L.J."/>
            <person name="Tambunga G."/>
            <person name="Toriumi M.J."/>
            <person name="Town C.D."/>
            <person name="Utterback T."/>
            <person name="Van Aken S."/>
            <person name="Vaysberg M."/>
            <person name="Vysotskaia V.S."/>
            <person name="Walker M."/>
            <person name="Wu D."/>
            <person name="Yu G."/>
            <person name="Fraser C.M."/>
            <person name="Venter J.C."/>
            <person name="Davis R.W."/>
        </authorList>
    </citation>
    <scope>NUCLEOTIDE SEQUENCE [LARGE SCALE GENOMIC DNA]</scope>
    <source>
        <strain>cv. Columbia</strain>
    </source>
</reference>
<reference key="2">
    <citation type="journal article" date="2017" name="Plant J.">
        <title>Araport11: a complete reannotation of the Arabidopsis thaliana reference genome.</title>
        <authorList>
            <person name="Cheng C.Y."/>
            <person name="Krishnakumar V."/>
            <person name="Chan A.P."/>
            <person name="Thibaud-Nissen F."/>
            <person name="Schobel S."/>
            <person name="Town C.D."/>
        </authorList>
    </citation>
    <scope>GENOME REANNOTATION</scope>
    <source>
        <strain>cv. Columbia</strain>
    </source>
</reference>
<reference key="3">
    <citation type="journal article" date="2003" name="Science">
        <title>Empirical analysis of transcriptional activity in the Arabidopsis genome.</title>
        <authorList>
            <person name="Yamada K."/>
            <person name="Lim J."/>
            <person name="Dale J.M."/>
            <person name="Chen H."/>
            <person name="Shinn P."/>
            <person name="Palm C.J."/>
            <person name="Southwick A.M."/>
            <person name="Wu H.C."/>
            <person name="Kim C.J."/>
            <person name="Nguyen M."/>
            <person name="Pham P.K."/>
            <person name="Cheuk R.F."/>
            <person name="Karlin-Newmann G."/>
            <person name="Liu S.X."/>
            <person name="Lam B."/>
            <person name="Sakano H."/>
            <person name="Wu T."/>
            <person name="Yu G."/>
            <person name="Miranda M."/>
            <person name="Quach H.L."/>
            <person name="Tripp M."/>
            <person name="Chang C.H."/>
            <person name="Lee J.M."/>
            <person name="Toriumi M.J."/>
            <person name="Chan M.M."/>
            <person name="Tang C.C."/>
            <person name="Onodera C.S."/>
            <person name="Deng J.M."/>
            <person name="Akiyama K."/>
            <person name="Ansari Y."/>
            <person name="Arakawa T."/>
            <person name="Banh J."/>
            <person name="Banno F."/>
            <person name="Bowser L."/>
            <person name="Brooks S.Y."/>
            <person name="Carninci P."/>
            <person name="Chao Q."/>
            <person name="Choy N."/>
            <person name="Enju A."/>
            <person name="Goldsmith A.D."/>
            <person name="Gurjal M."/>
            <person name="Hansen N.F."/>
            <person name="Hayashizaki Y."/>
            <person name="Johnson-Hopson C."/>
            <person name="Hsuan V.W."/>
            <person name="Iida K."/>
            <person name="Karnes M."/>
            <person name="Khan S."/>
            <person name="Koesema E."/>
            <person name="Ishida J."/>
            <person name="Jiang P.X."/>
            <person name="Jones T."/>
            <person name="Kawai J."/>
            <person name="Kamiya A."/>
            <person name="Meyers C."/>
            <person name="Nakajima M."/>
            <person name="Narusaka M."/>
            <person name="Seki M."/>
            <person name="Sakurai T."/>
            <person name="Satou M."/>
            <person name="Tamse R."/>
            <person name="Vaysberg M."/>
            <person name="Wallender E.K."/>
            <person name="Wong C."/>
            <person name="Yamamura Y."/>
            <person name="Yuan S."/>
            <person name="Shinozaki K."/>
            <person name="Davis R.W."/>
            <person name="Theologis A."/>
            <person name="Ecker J.R."/>
        </authorList>
    </citation>
    <scope>NUCLEOTIDE SEQUENCE [LARGE SCALE MRNA]</scope>
    <source>
        <strain>cv. Columbia</strain>
    </source>
</reference>
<reference key="4">
    <citation type="journal article" date="2001" name="J. Biol. Chem.">
        <title>The Arabidopsis thaliana ABC protein superfamily, a complete inventory.</title>
        <authorList>
            <person name="Sanchez-Fernandez R."/>
            <person name="Davies T.G."/>
            <person name="Coleman J.O."/>
            <person name="Rea P.A."/>
        </authorList>
    </citation>
    <scope>GENE FAMILY</scope>
    <scope>NOMENCLATURE</scope>
</reference>
<reference key="5">
    <citation type="journal article" date="2008" name="Trends Plant Sci.">
        <title>Plant ABC proteins - a unified nomenclature and updated inventory.</title>
        <authorList>
            <person name="Verrier P.J."/>
            <person name="Bird D."/>
            <person name="Burla B."/>
            <person name="Dassa E."/>
            <person name="Forestier C."/>
            <person name="Geisler M."/>
            <person name="Klein M."/>
            <person name="Kolukisaoglu H.U."/>
            <person name="Lee Y."/>
            <person name="Martinoia E."/>
            <person name="Murphy A."/>
            <person name="Rea P.A."/>
            <person name="Samuels L."/>
            <person name="Schulz B."/>
            <person name="Spalding E.J."/>
            <person name="Yazaki K."/>
            <person name="Theodoulou F.L."/>
        </authorList>
    </citation>
    <scope>GENE FAMILY</scope>
    <scope>NOMENCLATURE</scope>
</reference>
<reference key="6">
    <citation type="journal article" date="2012" name="Mol. Cell. Proteomics">
        <title>Comparative large-scale characterisation of plant vs. mammal proteins reveals similar and idiosyncratic N-alpha acetylation features.</title>
        <authorList>
            <person name="Bienvenut W.V."/>
            <person name="Sumpton D."/>
            <person name="Martinez A."/>
            <person name="Lilla S."/>
            <person name="Espagne C."/>
            <person name="Meinnel T."/>
            <person name="Giglione C."/>
        </authorList>
    </citation>
    <scope>ACETYLATION [LARGE SCALE ANALYSIS] AT THR-2</scope>
    <scope>CLEAVAGE OF INITIATOR METHIONINE [LARGE SCALE ANALYSIS]</scope>
    <scope>IDENTIFICATION BY MASS SPECTROMETRY [LARGE SCALE ANALYSIS]</scope>
</reference>
<accession>Q8H0V6</accession>
<accession>Q9SGW1</accession>
<sequence>MTEVASSVVYEVLGRRAQDVDEPIMDYIINVLADEDFDFGEEGEGAFDAVGELLVAAECVSDFEECRLVCSKLSDKFGKHGLVKPTPTVRSLAMPVRMNDGMDDGPVKKKKPEPVDGPLLTERDLAKIERRKKKDDRQRELQYQQHVAEMEAAKAGMPTVSVNHDTGGGSAIRDIHMDNFNVSVGGRDLIVDGSITLSFGRHYGLVGRNGTGKTTFLRYMAMHAIEGIPTNCQILHVEQEVVGDKTTALQCVLNTDIERTKLLEEEIQILAKQRETEEPTAKDGMPTKDTVEGDLMSQRLEEIYKRLDAIDAYTAEARAASILAGLSFTPEMQLKATNTFSGGWRMRIALARALFIEPDLLLLDEPTNHLDLHAVLWLETYLTKWPKTFIVVSHAREFLNTVVTDIIHLQNQKLSTYKGNYDIFERTREEQVKNQQKAFESSERSRSHMQAFIDKFRYNAKRASLVQSRIKALDRLAHVDQVINDPDYKFEFPTPDDKPGPPIISFSDASFGYPGGPLLFRNLNFGIDLDSRIAMVGPNGIGKSTILKLISGDLQPSSGTVFRSAKVRVAVFSQHHVDGLDLSSNPLLYMMRCYPGVPEQKLRSHLGSLGVTGNLALQPMYTLSGGQKSRVAFAKITFKKPHLLLLDEPSNHLDLDAVEALIQGLVLFQGGICMVSHDEHLISGSVDELWVVSDGRIAPFHGTFHDYKKLLQSST</sequence>
<protein>
    <recommendedName>
        <fullName>ABC transporter F family member 3</fullName>
        <shortName>ABC transporter ABCF.3</shortName>
        <shortName>AtABCF3</shortName>
    </recommendedName>
    <alternativeName>
        <fullName>GCN20-type ATP-binding cassette protein GCN3</fullName>
    </alternativeName>
</protein>